<name>SYY_CHLCH</name>
<gene>
    <name evidence="1" type="primary">tyrS</name>
    <name type="ordered locus">Cag_1161</name>
</gene>
<dbReference type="EC" id="6.1.1.1" evidence="1"/>
<dbReference type="EMBL" id="CP000108">
    <property type="protein sequence ID" value="ABB28423.1"/>
    <property type="molecule type" value="Genomic_DNA"/>
</dbReference>
<dbReference type="SMR" id="Q3ARF2"/>
<dbReference type="STRING" id="340177.Cag_1161"/>
<dbReference type="KEGG" id="cch:Cag_1161"/>
<dbReference type="eggNOG" id="COG0162">
    <property type="taxonomic scope" value="Bacteria"/>
</dbReference>
<dbReference type="HOGENOM" id="CLU_024003_5_0_10"/>
<dbReference type="OrthoDB" id="9804243at2"/>
<dbReference type="GO" id="GO:0005829">
    <property type="term" value="C:cytosol"/>
    <property type="evidence" value="ECO:0007669"/>
    <property type="project" value="TreeGrafter"/>
</dbReference>
<dbReference type="GO" id="GO:0005524">
    <property type="term" value="F:ATP binding"/>
    <property type="evidence" value="ECO:0007669"/>
    <property type="project" value="UniProtKB-UniRule"/>
</dbReference>
<dbReference type="GO" id="GO:0003723">
    <property type="term" value="F:RNA binding"/>
    <property type="evidence" value="ECO:0007669"/>
    <property type="project" value="UniProtKB-KW"/>
</dbReference>
<dbReference type="GO" id="GO:0004831">
    <property type="term" value="F:tyrosine-tRNA ligase activity"/>
    <property type="evidence" value="ECO:0007669"/>
    <property type="project" value="UniProtKB-UniRule"/>
</dbReference>
<dbReference type="GO" id="GO:0006437">
    <property type="term" value="P:tyrosyl-tRNA aminoacylation"/>
    <property type="evidence" value="ECO:0007669"/>
    <property type="project" value="UniProtKB-UniRule"/>
</dbReference>
<dbReference type="CDD" id="cd00165">
    <property type="entry name" value="S4"/>
    <property type="match status" value="1"/>
</dbReference>
<dbReference type="CDD" id="cd00805">
    <property type="entry name" value="TyrRS_core"/>
    <property type="match status" value="1"/>
</dbReference>
<dbReference type="FunFam" id="3.40.50.620:FF:000061">
    <property type="entry name" value="Tyrosine--tRNA ligase"/>
    <property type="match status" value="1"/>
</dbReference>
<dbReference type="Gene3D" id="3.40.50.620">
    <property type="entry name" value="HUPs"/>
    <property type="match status" value="1"/>
</dbReference>
<dbReference type="Gene3D" id="3.10.290.10">
    <property type="entry name" value="RNA-binding S4 domain"/>
    <property type="match status" value="1"/>
</dbReference>
<dbReference type="Gene3D" id="1.10.240.10">
    <property type="entry name" value="Tyrosyl-Transfer RNA Synthetase"/>
    <property type="match status" value="1"/>
</dbReference>
<dbReference type="HAMAP" id="MF_02007">
    <property type="entry name" value="Tyr_tRNA_synth_type2"/>
    <property type="match status" value="1"/>
</dbReference>
<dbReference type="InterPro" id="IPR002305">
    <property type="entry name" value="aa-tRNA-synth_Ic"/>
</dbReference>
<dbReference type="InterPro" id="IPR014729">
    <property type="entry name" value="Rossmann-like_a/b/a_fold"/>
</dbReference>
<dbReference type="InterPro" id="IPR002942">
    <property type="entry name" value="S4_RNA-bd"/>
</dbReference>
<dbReference type="InterPro" id="IPR036986">
    <property type="entry name" value="S4_RNA-bd_sf"/>
</dbReference>
<dbReference type="InterPro" id="IPR054608">
    <property type="entry name" value="SYY-like_C"/>
</dbReference>
<dbReference type="InterPro" id="IPR002307">
    <property type="entry name" value="Tyr-tRNA-ligase"/>
</dbReference>
<dbReference type="InterPro" id="IPR024088">
    <property type="entry name" value="Tyr-tRNA-ligase_bac-type"/>
</dbReference>
<dbReference type="InterPro" id="IPR024108">
    <property type="entry name" value="Tyr-tRNA-ligase_bac_2"/>
</dbReference>
<dbReference type="NCBIfam" id="TIGR00234">
    <property type="entry name" value="tyrS"/>
    <property type="match status" value="1"/>
</dbReference>
<dbReference type="PANTHER" id="PTHR11766:SF1">
    <property type="entry name" value="TYROSINE--TRNA LIGASE"/>
    <property type="match status" value="1"/>
</dbReference>
<dbReference type="PANTHER" id="PTHR11766">
    <property type="entry name" value="TYROSYL-TRNA SYNTHETASE"/>
    <property type="match status" value="1"/>
</dbReference>
<dbReference type="Pfam" id="PF22421">
    <property type="entry name" value="SYY_C-terminal"/>
    <property type="match status" value="1"/>
</dbReference>
<dbReference type="Pfam" id="PF00579">
    <property type="entry name" value="tRNA-synt_1b"/>
    <property type="match status" value="1"/>
</dbReference>
<dbReference type="PRINTS" id="PR01040">
    <property type="entry name" value="TRNASYNTHTYR"/>
</dbReference>
<dbReference type="SMART" id="SM00363">
    <property type="entry name" value="S4"/>
    <property type="match status" value="1"/>
</dbReference>
<dbReference type="SUPFAM" id="SSF55174">
    <property type="entry name" value="Alpha-L RNA-binding motif"/>
    <property type="match status" value="1"/>
</dbReference>
<dbReference type="SUPFAM" id="SSF52374">
    <property type="entry name" value="Nucleotidylyl transferase"/>
    <property type="match status" value="1"/>
</dbReference>
<dbReference type="PROSITE" id="PS50889">
    <property type="entry name" value="S4"/>
    <property type="match status" value="1"/>
</dbReference>
<accession>Q3ARF2</accession>
<reference key="1">
    <citation type="submission" date="2005-08" db="EMBL/GenBank/DDBJ databases">
        <title>Complete sequence of Chlorobium chlorochromatii CaD3.</title>
        <authorList>
            <consortium name="US DOE Joint Genome Institute"/>
            <person name="Copeland A."/>
            <person name="Lucas S."/>
            <person name="Lapidus A."/>
            <person name="Barry K."/>
            <person name="Detter J.C."/>
            <person name="Glavina T."/>
            <person name="Hammon N."/>
            <person name="Israni S."/>
            <person name="Pitluck S."/>
            <person name="Bryant D."/>
            <person name="Schmutz J."/>
            <person name="Larimer F."/>
            <person name="Land M."/>
            <person name="Kyrpides N."/>
            <person name="Ivanova N."/>
            <person name="Richardson P."/>
        </authorList>
    </citation>
    <scope>NUCLEOTIDE SEQUENCE [LARGE SCALE GENOMIC DNA]</scope>
    <source>
        <strain>CaD3</strain>
    </source>
</reference>
<organism>
    <name type="scientific">Chlorobium chlorochromatii (strain CaD3)</name>
    <dbReference type="NCBI Taxonomy" id="340177"/>
    <lineage>
        <taxon>Bacteria</taxon>
        <taxon>Pseudomonadati</taxon>
        <taxon>Chlorobiota</taxon>
        <taxon>Chlorobiia</taxon>
        <taxon>Chlorobiales</taxon>
        <taxon>Chlorobiaceae</taxon>
        <taxon>Chlorobium/Pelodictyon group</taxon>
        <taxon>Chlorobium</taxon>
    </lineage>
</organism>
<keyword id="KW-0030">Aminoacyl-tRNA synthetase</keyword>
<keyword id="KW-0067">ATP-binding</keyword>
<keyword id="KW-0963">Cytoplasm</keyword>
<keyword id="KW-0436">Ligase</keyword>
<keyword id="KW-0547">Nucleotide-binding</keyword>
<keyword id="KW-0648">Protein biosynthesis</keyword>
<keyword id="KW-0694">RNA-binding</keyword>
<protein>
    <recommendedName>
        <fullName evidence="1">Tyrosine--tRNA ligase</fullName>
        <ecNumber evidence="1">6.1.1.1</ecNumber>
    </recommendedName>
    <alternativeName>
        <fullName evidence="1">Tyrosyl-tRNA synthetase</fullName>
        <shortName evidence="1">TyrRS</shortName>
    </alternativeName>
</protein>
<evidence type="ECO:0000255" key="1">
    <source>
        <dbReference type="HAMAP-Rule" id="MF_02007"/>
    </source>
</evidence>
<sequence>MNFPSIQEQLDLITRNTVEIISVDELEQKLVSSQKSGKPLNIKLGADPSRPDLHLGHSVVLRKLRDFQDLGHHAILIIGNFTAMIGDPSGKSKTRPQLSAEEAAENGRSYFEQAIKILDAANTTLCSNADWLGAMTFADVIRLSSHYTVARMLERNDFEQRYRAQEPISIHEFLYPLAQGMDSVHLKNDVELGGTDQKFNLLVGRDLQREYGIAPQVCITMPLLVGTDGKDKMSKSLDNAISFTDTPNDMYGRALSIPDTLIETYSRLLLSQFGAALNEILSQIETNPRLAKRAMARHIVADYYSPEAASAAEEHFDKLFVHKQAPDNLELLELEATSMPIIDLLTLLGAAPSKSEARRMIQAKSVSIDDEKIEDFNAVIALEGEAKIVRAGKRKFFKIRSK</sequence>
<proteinExistence type="inferred from homology"/>
<comment type="function">
    <text evidence="1">Catalyzes the attachment of tyrosine to tRNA(Tyr) in a two-step reaction: tyrosine is first activated by ATP to form Tyr-AMP and then transferred to the acceptor end of tRNA(Tyr).</text>
</comment>
<comment type="catalytic activity">
    <reaction evidence="1">
        <text>tRNA(Tyr) + L-tyrosine + ATP = L-tyrosyl-tRNA(Tyr) + AMP + diphosphate + H(+)</text>
        <dbReference type="Rhea" id="RHEA:10220"/>
        <dbReference type="Rhea" id="RHEA-COMP:9706"/>
        <dbReference type="Rhea" id="RHEA-COMP:9707"/>
        <dbReference type="ChEBI" id="CHEBI:15378"/>
        <dbReference type="ChEBI" id="CHEBI:30616"/>
        <dbReference type="ChEBI" id="CHEBI:33019"/>
        <dbReference type="ChEBI" id="CHEBI:58315"/>
        <dbReference type="ChEBI" id="CHEBI:78442"/>
        <dbReference type="ChEBI" id="CHEBI:78536"/>
        <dbReference type="ChEBI" id="CHEBI:456215"/>
        <dbReference type="EC" id="6.1.1.1"/>
    </reaction>
</comment>
<comment type="subunit">
    <text evidence="1">Homodimer.</text>
</comment>
<comment type="subcellular location">
    <subcellularLocation>
        <location evidence="1">Cytoplasm</location>
    </subcellularLocation>
</comment>
<comment type="similarity">
    <text evidence="1">Belongs to the class-I aminoacyl-tRNA synthetase family. TyrS type 2 subfamily.</text>
</comment>
<feature type="chain" id="PRO_0000236708" description="Tyrosine--tRNA ligase">
    <location>
        <begin position="1"/>
        <end position="402"/>
    </location>
</feature>
<feature type="domain" description="S4 RNA-binding" evidence="1">
    <location>
        <begin position="339"/>
        <end position="402"/>
    </location>
</feature>
<feature type="short sequence motif" description="'HIGH' region">
    <location>
        <begin position="48"/>
        <end position="57"/>
    </location>
</feature>
<feature type="short sequence motif" description="'KMSKS' region">
    <location>
        <begin position="232"/>
        <end position="236"/>
    </location>
</feature>
<feature type="binding site" evidence="1">
    <location>
        <position position="235"/>
    </location>
    <ligand>
        <name>ATP</name>
        <dbReference type="ChEBI" id="CHEBI:30616"/>
    </ligand>
</feature>